<gene>
    <name evidence="1" type="primary">engB</name>
    <name type="ordered locus">lwe1571</name>
</gene>
<keyword id="KW-0131">Cell cycle</keyword>
<keyword id="KW-0132">Cell division</keyword>
<keyword id="KW-0342">GTP-binding</keyword>
<keyword id="KW-0460">Magnesium</keyword>
<keyword id="KW-0479">Metal-binding</keyword>
<keyword id="KW-0547">Nucleotide-binding</keyword>
<keyword id="KW-0717">Septation</keyword>
<evidence type="ECO:0000255" key="1">
    <source>
        <dbReference type="HAMAP-Rule" id="MF_00321"/>
    </source>
</evidence>
<reference key="1">
    <citation type="journal article" date="2006" name="J. Bacteriol.">
        <title>Whole-genome sequence of Listeria welshimeri reveals common steps in genome reduction with Listeria innocua as compared to Listeria monocytogenes.</title>
        <authorList>
            <person name="Hain T."/>
            <person name="Steinweg C."/>
            <person name="Kuenne C.T."/>
            <person name="Billion A."/>
            <person name="Ghai R."/>
            <person name="Chatterjee S.S."/>
            <person name="Domann E."/>
            <person name="Kaerst U."/>
            <person name="Goesmann A."/>
            <person name="Bekel T."/>
            <person name="Bartels D."/>
            <person name="Kaiser O."/>
            <person name="Meyer F."/>
            <person name="Puehler A."/>
            <person name="Weisshaar B."/>
            <person name="Wehland J."/>
            <person name="Liang C."/>
            <person name="Dandekar T."/>
            <person name="Lampidis R."/>
            <person name="Kreft J."/>
            <person name="Goebel W."/>
            <person name="Chakraborty T."/>
        </authorList>
    </citation>
    <scope>NUCLEOTIDE SEQUENCE [LARGE SCALE GENOMIC DNA]</scope>
    <source>
        <strain>ATCC 35897 / DSM 20650 / CCUG 15529 / CIP 8149 / NCTC 11857 / SLCC 5334 / V8</strain>
    </source>
</reference>
<name>ENGB_LISW6</name>
<accession>A0AJ07</accession>
<organism>
    <name type="scientific">Listeria welshimeri serovar 6b (strain ATCC 35897 / DSM 20650 / CCUG 15529 / CIP 8149 / NCTC 11857 / SLCC 5334 / V8)</name>
    <dbReference type="NCBI Taxonomy" id="386043"/>
    <lineage>
        <taxon>Bacteria</taxon>
        <taxon>Bacillati</taxon>
        <taxon>Bacillota</taxon>
        <taxon>Bacilli</taxon>
        <taxon>Bacillales</taxon>
        <taxon>Listeriaceae</taxon>
        <taxon>Listeria</taxon>
    </lineage>
</organism>
<dbReference type="EMBL" id="AM263198">
    <property type="protein sequence ID" value="CAK20989.1"/>
    <property type="molecule type" value="Genomic_DNA"/>
</dbReference>
<dbReference type="RefSeq" id="WP_011702357.1">
    <property type="nucleotide sequence ID" value="NC_008555.1"/>
</dbReference>
<dbReference type="SMR" id="A0AJ07"/>
<dbReference type="STRING" id="386043.lwe1571"/>
<dbReference type="GeneID" id="61189448"/>
<dbReference type="KEGG" id="lwe:lwe1571"/>
<dbReference type="eggNOG" id="COG0218">
    <property type="taxonomic scope" value="Bacteria"/>
</dbReference>
<dbReference type="HOGENOM" id="CLU_033732_3_0_9"/>
<dbReference type="OrthoDB" id="9804921at2"/>
<dbReference type="Proteomes" id="UP000000779">
    <property type="component" value="Chromosome"/>
</dbReference>
<dbReference type="GO" id="GO:0005829">
    <property type="term" value="C:cytosol"/>
    <property type="evidence" value="ECO:0007669"/>
    <property type="project" value="TreeGrafter"/>
</dbReference>
<dbReference type="GO" id="GO:0005525">
    <property type="term" value="F:GTP binding"/>
    <property type="evidence" value="ECO:0007669"/>
    <property type="project" value="UniProtKB-UniRule"/>
</dbReference>
<dbReference type="GO" id="GO:0046872">
    <property type="term" value="F:metal ion binding"/>
    <property type="evidence" value="ECO:0007669"/>
    <property type="project" value="UniProtKB-KW"/>
</dbReference>
<dbReference type="GO" id="GO:0000917">
    <property type="term" value="P:division septum assembly"/>
    <property type="evidence" value="ECO:0007669"/>
    <property type="project" value="UniProtKB-KW"/>
</dbReference>
<dbReference type="CDD" id="cd01876">
    <property type="entry name" value="YihA_EngB"/>
    <property type="match status" value="1"/>
</dbReference>
<dbReference type="FunFam" id="3.40.50.300:FF:000098">
    <property type="entry name" value="Probable GTP-binding protein EngB"/>
    <property type="match status" value="1"/>
</dbReference>
<dbReference type="Gene3D" id="3.40.50.300">
    <property type="entry name" value="P-loop containing nucleotide triphosphate hydrolases"/>
    <property type="match status" value="1"/>
</dbReference>
<dbReference type="HAMAP" id="MF_00321">
    <property type="entry name" value="GTPase_EngB"/>
    <property type="match status" value="1"/>
</dbReference>
<dbReference type="InterPro" id="IPR030393">
    <property type="entry name" value="G_ENGB_dom"/>
</dbReference>
<dbReference type="InterPro" id="IPR006073">
    <property type="entry name" value="GTP-bd"/>
</dbReference>
<dbReference type="InterPro" id="IPR019987">
    <property type="entry name" value="GTP-bd_ribosome_bio_YsxC"/>
</dbReference>
<dbReference type="InterPro" id="IPR027417">
    <property type="entry name" value="P-loop_NTPase"/>
</dbReference>
<dbReference type="NCBIfam" id="TIGR03598">
    <property type="entry name" value="GTPase_YsxC"/>
    <property type="match status" value="1"/>
</dbReference>
<dbReference type="PANTHER" id="PTHR11649:SF13">
    <property type="entry name" value="ENGB-TYPE G DOMAIN-CONTAINING PROTEIN"/>
    <property type="match status" value="1"/>
</dbReference>
<dbReference type="PANTHER" id="PTHR11649">
    <property type="entry name" value="MSS1/TRME-RELATED GTP-BINDING PROTEIN"/>
    <property type="match status" value="1"/>
</dbReference>
<dbReference type="Pfam" id="PF01926">
    <property type="entry name" value="MMR_HSR1"/>
    <property type="match status" value="1"/>
</dbReference>
<dbReference type="SUPFAM" id="SSF52540">
    <property type="entry name" value="P-loop containing nucleoside triphosphate hydrolases"/>
    <property type="match status" value="1"/>
</dbReference>
<dbReference type="PROSITE" id="PS51706">
    <property type="entry name" value="G_ENGB"/>
    <property type="match status" value="1"/>
</dbReference>
<comment type="function">
    <text evidence="1">Necessary for normal cell division and for the maintenance of normal septation.</text>
</comment>
<comment type="cofactor">
    <cofactor evidence="1">
        <name>Mg(2+)</name>
        <dbReference type="ChEBI" id="CHEBI:18420"/>
    </cofactor>
</comment>
<comment type="similarity">
    <text evidence="1">Belongs to the TRAFAC class TrmE-Era-EngA-EngB-Septin-like GTPase superfamily. EngB GTPase family.</text>
</comment>
<protein>
    <recommendedName>
        <fullName evidence="1">Probable GTP-binding protein EngB</fullName>
    </recommendedName>
</protein>
<sequence length="194" mass="22621">MDVNNVELIISAVRPEQYPETDLPEYALAGRSNVGKSSFINTMIRRKSMARISQKPGKTQTLNFYKIEEALFFVDVPGYGFAKVSKTEREKWGVMIETYITSREQLRGVIQIVDLRHKPTEDDRMMYEFLKYYEIPVIVVATKADKIPRSKWQKNAKIVRETLDFDPDDKFVLFSSETKMGKDEAWQFIKEGME</sequence>
<feature type="chain" id="PRO_1000005831" description="Probable GTP-binding protein EngB">
    <location>
        <begin position="1"/>
        <end position="194"/>
    </location>
</feature>
<feature type="domain" description="EngB-type G" evidence="1">
    <location>
        <begin position="22"/>
        <end position="194"/>
    </location>
</feature>
<feature type="binding site" evidence="1">
    <location>
        <begin position="30"/>
        <end position="37"/>
    </location>
    <ligand>
        <name>GTP</name>
        <dbReference type="ChEBI" id="CHEBI:37565"/>
    </ligand>
</feature>
<feature type="binding site" evidence="1">
    <location>
        <position position="37"/>
    </location>
    <ligand>
        <name>Mg(2+)</name>
        <dbReference type="ChEBI" id="CHEBI:18420"/>
    </ligand>
</feature>
<feature type="binding site" evidence="1">
    <location>
        <begin position="57"/>
        <end position="61"/>
    </location>
    <ligand>
        <name>GTP</name>
        <dbReference type="ChEBI" id="CHEBI:37565"/>
    </ligand>
</feature>
<feature type="binding site" evidence="1">
    <location>
        <position position="59"/>
    </location>
    <ligand>
        <name>Mg(2+)</name>
        <dbReference type="ChEBI" id="CHEBI:18420"/>
    </ligand>
</feature>
<feature type="binding site" evidence="1">
    <location>
        <begin position="75"/>
        <end position="78"/>
    </location>
    <ligand>
        <name>GTP</name>
        <dbReference type="ChEBI" id="CHEBI:37565"/>
    </ligand>
</feature>
<feature type="binding site" evidence="1">
    <location>
        <begin position="142"/>
        <end position="145"/>
    </location>
    <ligand>
        <name>GTP</name>
        <dbReference type="ChEBI" id="CHEBI:37565"/>
    </ligand>
</feature>
<feature type="binding site" evidence="1">
    <location>
        <begin position="174"/>
        <end position="176"/>
    </location>
    <ligand>
        <name>GTP</name>
        <dbReference type="ChEBI" id="CHEBI:37565"/>
    </ligand>
</feature>
<proteinExistence type="inferred from homology"/>